<dbReference type="EC" id="2.4.2.1" evidence="2"/>
<dbReference type="EMBL" id="CP001161">
    <property type="protein sequence ID" value="ACL30884.1"/>
    <property type="molecule type" value="Genomic_DNA"/>
</dbReference>
<dbReference type="RefSeq" id="WP_009874491.1">
    <property type="nucleotide sequence ID" value="NC_011833.1"/>
</dbReference>
<dbReference type="SMR" id="B8D9W3"/>
<dbReference type="KEGG" id="bap:BUAP5A_534"/>
<dbReference type="HOGENOM" id="CLU_068457_2_0_6"/>
<dbReference type="OrthoDB" id="9782889at2"/>
<dbReference type="Proteomes" id="UP000006904">
    <property type="component" value="Chromosome"/>
</dbReference>
<dbReference type="GO" id="GO:0005829">
    <property type="term" value="C:cytosol"/>
    <property type="evidence" value="ECO:0007669"/>
    <property type="project" value="TreeGrafter"/>
</dbReference>
<dbReference type="GO" id="GO:0004731">
    <property type="term" value="F:purine-nucleoside phosphorylase activity"/>
    <property type="evidence" value="ECO:0007669"/>
    <property type="project" value="UniProtKB-UniRule"/>
</dbReference>
<dbReference type="GO" id="GO:0006152">
    <property type="term" value="P:purine nucleoside catabolic process"/>
    <property type="evidence" value="ECO:0007669"/>
    <property type="project" value="TreeGrafter"/>
</dbReference>
<dbReference type="CDD" id="cd09006">
    <property type="entry name" value="PNP_EcPNPI-like"/>
    <property type="match status" value="1"/>
</dbReference>
<dbReference type="Gene3D" id="3.40.50.1580">
    <property type="entry name" value="Nucleoside phosphorylase domain"/>
    <property type="match status" value="1"/>
</dbReference>
<dbReference type="HAMAP" id="MF_01627">
    <property type="entry name" value="Pur_nucleosid_phosp"/>
    <property type="match status" value="1"/>
</dbReference>
<dbReference type="InterPro" id="IPR004402">
    <property type="entry name" value="DeoD-type"/>
</dbReference>
<dbReference type="InterPro" id="IPR018016">
    <property type="entry name" value="Nucleoside_phosphorylase_CS"/>
</dbReference>
<dbReference type="InterPro" id="IPR000845">
    <property type="entry name" value="Nucleoside_phosphorylase_d"/>
</dbReference>
<dbReference type="InterPro" id="IPR035994">
    <property type="entry name" value="Nucleoside_phosphorylase_sf"/>
</dbReference>
<dbReference type="NCBIfam" id="TIGR00107">
    <property type="entry name" value="deoD"/>
    <property type="match status" value="1"/>
</dbReference>
<dbReference type="NCBIfam" id="NF004489">
    <property type="entry name" value="PRK05819.1"/>
    <property type="match status" value="1"/>
</dbReference>
<dbReference type="PANTHER" id="PTHR43691:SF11">
    <property type="entry name" value="FI09636P-RELATED"/>
    <property type="match status" value="1"/>
</dbReference>
<dbReference type="PANTHER" id="PTHR43691">
    <property type="entry name" value="URIDINE PHOSPHORYLASE"/>
    <property type="match status" value="1"/>
</dbReference>
<dbReference type="Pfam" id="PF01048">
    <property type="entry name" value="PNP_UDP_1"/>
    <property type="match status" value="1"/>
</dbReference>
<dbReference type="SUPFAM" id="SSF53167">
    <property type="entry name" value="Purine and uridine phosphorylases"/>
    <property type="match status" value="1"/>
</dbReference>
<dbReference type="PROSITE" id="PS01232">
    <property type="entry name" value="PNP_UDP_1"/>
    <property type="match status" value="1"/>
</dbReference>
<organism>
    <name type="scientific">Buchnera aphidicola subsp. Acyrthosiphon pisum (strain 5A)</name>
    <dbReference type="NCBI Taxonomy" id="563178"/>
    <lineage>
        <taxon>Bacteria</taxon>
        <taxon>Pseudomonadati</taxon>
        <taxon>Pseudomonadota</taxon>
        <taxon>Gammaproteobacteria</taxon>
        <taxon>Enterobacterales</taxon>
        <taxon>Erwiniaceae</taxon>
        <taxon>Buchnera</taxon>
    </lineage>
</organism>
<evidence type="ECO:0000250" key="1">
    <source>
        <dbReference type="UniProtKB" id="P50389"/>
    </source>
</evidence>
<evidence type="ECO:0000255" key="2">
    <source>
        <dbReference type="HAMAP-Rule" id="MF_01627"/>
    </source>
</evidence>
<reference key="1">
    <citation type="journal article" date="2009" name="Science">
        <title>The dynamics and time scale of ongoing genomic erosion in symbiotic bacteria.</title>
        <authorList>
            <person name="Moran N.A."/>
            <person name="McLaughlin H.J."/>
            <person name="Sorek R."/>
        </authorList>
    </citation>
    <scope>NUCLEOTIDE SEQUENCE [LARGE SCALE GENOMIC DNA]</scope>
    <source>
        <strain>5A</strain>
    </source>
</reference>
<protein>
    <recommendedName>
        <fullName evidence="2">Purine nucleoside phosphorylase DeoD-type</fullName>
        <shortName evidence="2">PNP</shortName>
        <ecNumber evidence="2">2.4.2.1</ecNumber>
    </recommendedName>
</protein>
<proteinExistence type="inferred from homology"/>
<keyword id="KW-0328">Glycosyltransferase</keyword>
<keyword id="KW-0808">Transferase</keyword>
<sequence length="234" mass="26425">MSTPHINSKKDDFSDIVLMPGDPVRAKYIAEKYLSNFVQVNNTRLMLAYTGFYKNRKISIMSHGIGIPSASLYTRELIIEFNVKKIIRIGTCGAVRDDIKLRDIVISMGASTDSKVNRIRFNDHDFAAIADFDMIYNIVSISKKMKIKVSIGNFFTTDSFYNDDKKMLNILKKYNIIGVDMETAGIYGVASELKVQALSICTVSDHITNKEFLSSKERESSFNDMIELALESVL</sequence>
<accession>B8D9W3</accession>
<comment type="function">
    <text evidence="2">Catalyzes the reversible phosphorolytic breakdown of the N-glycosidic bond in the beta-(deoxy)ribonucleoside molecules, with the formation of the corresponding free purine bases and pentose-1-phosphate.</text>
</comment>
<comment type="catalytic activity">
    <reaction evidence="2">
        <text>a purine D-ribonucleoside + phosphate = a purine nucleobase + alpha-D-ribose 1-phosphate</text>
        <dbReference type="Rhea" id="RHEA:19805"/>
        <dbReference type="ChEBI" id="CHEBI:26386"/>
        <dbReference type="ChEBI" id="CHEBI:43474"/>
        <dbReference type="ChEBI" id="CHEBI:57720"/>
        <dbReference type="ChEBI" id="CHEBI:142355"/>
        <dbReference type="EC" id="2.4.2.1"/>
    </reaction>
</comment>
<comment type="catalytic activity">
    <reaction evidence="2">
        <text>a purine 2'-deoxy-D-ribonucleoside + phosphate = a purine nucleobase + 2-deoxy-alpha-D-ribose 1-phosphate</text>
        <dbReference type="Rhea" id="RHEA:36431"/>
        <dbReference type="ChEBI" id="CHEBI:26386"/>
        <dbReference type="ChEBI" id="CHEBI:43474"/>
        <dbReference type="ChEBI" id="CHEBI:57259"/>
        <dbReference type="ChEBI" id="CHEBI:142361"/>
        <dbReference type="EC" id="2.4.2.1"/>
    </reaction>
</comment>
<comment type="subunit">
    <text evidence="2">Homohexamer; trimer of homodimers.</text>
</comment>
<comment type="similarity">
    <text evidence="2">Belongs to the PNP/UDP phosphorylase family.</text>
</comment>
<feature type="chain" id="PRO_1000186181" description="Purine nucleoside phosphorylase DeoD-type">
    <location>
        <begin position="1"/>
        <end position="234"/>
    </location>
</feature>
<feature type="active site" description="Proton donor" evidence="2">
    <location>
        <position position="205"/>
    </location>
</feature>
<feature type="binding site" evidence="1">
    <location>
        <position position="5"/>
    </location>
    <ligand>
        <name>a purine D-ribonucleoside</name>
        <dbReference type="ChEBI" id="CHEBI:142355"/>
        <note>ligand shared between dimeric partners</note>
    </ligand>
</feature>
<feature type="binding site" description="in other chain" evidence="1">
    <location>
        <position position="21"/>
    </location>
    <ligand>
        <name>phosphate</name>
        <dbReference type="ChEBI" id="CHEBI:43474"/>
        <note>ligand shared between dimeric partners</note>
    </ligand>
</feature>
<feature type="binding site" description="in other chain" evidence="1">
    <location>
        <position position="25"/>
    </location>
    <ligand>
        <name>phosphate</name>
        <dbReference type="ChEBI" id="CHEBI:43474"/>
        <note>ligand shared between dimeric partners</note>
    </ligand>
</feature>
<feature type="binding site" evidence="1">
    <location>
        <position position="44"/>
    </location>
    <ligand>
        <name>phosphate</name>
        <dbReference type="ChEBI" id="CHEBI:43474"/>
        <note>ligand shared between dimeric partners</note>
    </ligand>
</feature>
<feature type="binding site" description="in other chain" evidence="1">
    <location>
        <begin position="88"/>
        <end position="91"/>
    </location>
    <ligand>
        <name>phosphate</name>
        <dbReference type="ChEBI" id="CHEBI:43474"/>
        <note>ligand shared between dimeric partners</note>
    </ligand>
</feature>
<feature type="binding site" description="in other chain" evidence="1">
    <location>
        <begin position="180"/>
        <end position="182"/>
    </location>
    <ligand>
        <name>a purine D-ribonucleoside</name>
        <dbReference type="ChEBI" id="CHEBI:142355"/>
        <note>ligand shared between dimeric partners</note>
    </ligand>
</feature>
<feature type="binding site" description="in other chain" evidence="1">
    <location>
        <begin position="204"/>
        <end position="205"/>
    </location>
    <ligand>
        <name>a purine D-ribonucleoside</name>
        <dbReference type="ChEBI" id="CHEBI:142355"/>
        <note>ligand shared between dimeric partners</note>
    </ligand>
</feature>
<feature type="site" description="Important for catalytic activity" evidence="2">
    <location>
        <position position="218"/>
    </location>
</feature>
<name>DEOD_BUCA5</name>
<gene>
    <name evidence="2" type="primary">deoD</name>
    <name type="ordered locus">BUAP5A_534</name>
</gene>